<organism>
    <name type="scientific">Dictyoglomus thermophilum (strain ATCC 35947 / DSM 3960 / H-6-12)</name>
    <dbReference type="NCBI Taxonomy" id="309799"/>
    <lineage>
        <taxon>Bacteria</taxon>
        <taxon>Pseudomonadati</taxon>
        <taxon>Dictyoglomota</taxon>
        <taxon>Dictyoglomia</taxon>
        <taxon>Dictyoglomales</taxon>
        <taxon>Dictyoglomaceae</taxon>
        <taxon>Dictyoglomus</taxon>
    </lineage>
</organism>
<protein>
    <recommendedName>
        <fullName evidence="1">UvrABC system protein C</fullName>
        <shortName evidence="1">Protein UvrC</shortName>
    </recommendedName>
    <alternativeName>
        <fullName evidence="1">Excinuclease ABC subunit C</fullName>
    </alternativeName>
</protein>
<proteinExistence type="inferred from homology"/>
<evidence type="ECO:0000255" key="1">
    <source>
        <dbReference type="HAMAP-Rule" id="MF_00203"/>
    </source>
</evidence>
<comment type="function">
    <text evidence="1">The UvrABC repair system catalyzes the recognition and processing of DNA lesions. UvrC both incises the 5' and 3' sides of the lesion. The N-terminal half is responsible for the 3' incision and the C-terminal half is responsible for the 5' incision.</text>
</comment>
<comment type="subunit">
    <text evidence="1">Interacts with UvrB in an incision complex.</text>
</comment>
<comment type="subcellular location">
    <subcellularLocation>
        <location evidence="1">Cytoplasm</location>
    </subcellularLocation>
</comment>
<comment type="similarity">
    <text evidence="1">Belongs to the UvrC family.</text>
</comment>
<feature type="chain" id="PRO_1000099476" description="UvrABC system protein C">
    <location>
        <begin position="1"/>
        <end position="599"/>
    </location>
</feature>
<feature type="domain" description="GIY-YIG" evidence="1">
    <location>
        <begin position="19"/>
        <end position="95"/>
    </location>
</feature>
<feature type="domain" description="UVR" evidence="1">
    <location>
        <begin position="206"/>
        <end position="241"/>
    </location>
</feature>
<dbReference type="EMBL" id="CP001146">
    <property type="protein sequence ID" value="ACI20004.1"/>
    <property type="molecule type" value="Genomic_DNA"/>
</dbReference>
<dbReference type="RefSeq" id="WP_012548636.1">
    <property type="nucleotide sequence ID" value="NC_011297.1"/>
</dbReference>
<dbReference type="SMR" id="B5YF86"/>
<dbReference type="STRING" id="309799.DICTH_1375"/>
<dbReference type="PaxDb" id="309799-DICTH_1375"/>
<dbReference type="KEGG" id="dth:DICTH_1375"/>
<dbReference type="eggNOG" id="COG0322">
    <property type="taxonomic scope" value="Bacteria"/>
</dbReference>
<dbReference type="HOGENOM" id="CLU_014841_3_2_0"/>
<dbReference type="OrthoDB" id="9804933at2"/>
<dbReference type="Proteomes" id="UP000001733">
    <property type="component" value="Chromosome"/>
</dbReference>
<dbReference type="GO" id="GO:0005737">
    <property type="term" value="C:cytoplasm"/>
    <property type="evidence" value="ECO:0007669"/>
    <property type="project" value="UniProtKB-SubCell"/>
</dbReference>
<dbReference type="GO" id="GO:0009380">
    <property type="term" value="C:excinuclease repair complex"/>
    <property type="evidence" value="ECO:0007669"/>
    <property type="project" value="InterPro"/>
</dbReference>
<dbReference type="GO" id="GO:0003677">
    <property type="term" value="F:DNA binding"/>
    <property type="evidence" value="ECO:0007669"/>
    <property type="project" value="UniProtKB-UniRule"/>
</dbReference>
<dbReference type="GO" id="GO:0009381">
    <property type="term" value="F:excinuclease ABC activity"/>
    <property type="evidence" value="ECO:0007669"/>
    <property type="project" value="UniProtKB-UniRule"/>
</dbReference>
<dbReference type="GO" id="GO:0006289">
    <property type="term" value="P:nucleotide-excision repair"/>
    <property type="evidence" value="ECO:0007669"/>
    <property type="project" value="UniProtKB-UniRule"/>
</dbReference>
<dbReference type="GO" id="GO:0009432">
    <property type="term" value="P:SOS response"/>
    <property type="evidence" value="ECO:0007669"/>
    <property type="project" value="UniProtKB-UniRule"/>
</dbReference>
<dbReference type="CDD" id="cd10434">
    <property type="entry name" value="GIY-YIG_UvrC_Cho"/>
    <property type="match status" value="1"/>
</dbReference>
<dbReference type="FunFam" id="1.10.150.20:FF:000005">
    <property type="entry name" value="UvrABC system protein C"/>
    <property type="match status" value="1"/>
</dbReference>
<dbReference type="FunFam" id="3.40.1440.10:FF:000001">
    <property type="entry name" value="UvrABC system protein C"/>
    <property type="match status" value="1"/>
</dbReference>
<dbReference type="Gene3D" id="1.10.150.20">
    <property type="entry name" value="5' to 3' exonuclease, C-terminal subdomain"/>
    <property type="match status" value="1"/>
</dbReference>
<dbReference type="Gene3D" id="3.40.1440.10">
    <property type="entry name" value="GIY-YIG endonuclease"/>
    <property type="match status" value="1"/>
</dbReference>
<dbReference type="Gene3D" id="4.10.860.10">
    <property type="entry name" value="UVR domain"/>
    <property type="match status" value="1"/>
</dbReference>
<dbReference type="Gene3D" id="3.30.420.340">
    <property type="entry name" value="UvrC, RNAse H endonuclease domain"/>
    <property type="match status" value="1"/>
</dbReference>
<dbReference type="HAMAP" id="MF_00203">
    <property type="entry name" value="UvrC"/>
    <property type="match status" value="1"/>
</dbReference>
<dbReference type="InterPro" id="IPR000305">
    <property type="entry name" value="GIY-YIG_endonuc"/>
</dbReference>
<dbReference type="InterPro" id="IPR035901">
    <property type="entry name" value="GIY-YIG_endonuc_sf"/>
</dbReference>
<dbReference type="InterPro" id="IPR047296">
    <property type="entry name" value="GIY-YIG_UvrC_Cho"/>
</dbReference>
<dbReference type="InterPro" id="IPR003583">
    <property type="entry name" value="Hlx-hairpin-Hlx_DNA-bd_motif"/>
</dbReference>
<dbReference type="InterPro" id="IPR010994">
    <property type="entry name" value="RuvA_2-like"/>
</dbReference>
<dbReference type="InterPro" id="IPR001943">
    <property type="entry name" value="UVR_dom"/>
</dbReference>
<dbReference type="InterPro" id="IPR036876">
    <property type="entry name" value="UVR_dom_sf"/>
</dbReference>
<dbReference type="InterPro" id="IPR050066">
    <property type="entry name" value="UvrABC_protein_C"/>
</dbReference>
<dbReference type="InterPro" id="IPR004791">
    <property type="entry name" value="UvrC"/>
</dbReference>
<dbReference type="InterPro" id="IPR001162">
    <property type="entry name" value="UvrC_RNase_H_dom"/>
</dbReference>
<dbReference type="InterPro" id="IPR038476">
    <property type="entry name" value="UvrC_RNase_H_dom_sf"/>
</dbReference>
<dbReference type="NCBIfam" id="TIGR00194">
    <property type="entry name" value="uvrC"/>
    <property type="match status" value="1"/>
</dbReference>
<dbReference type="PANTHER" id="PTHR30562:SF1">
    <property type="entry name" value="UVRABC SYSTEM PROTEIN C"/>
    <property type="match status" value="1"/>
</dbReference>
<dbReference type="PANTHER" id="PTHR30562">
    <property type="entry name" value="UVRC/OXIDOREDUCTASE"/>
    <property type="match status" value="1"/>
</dbReference>
<dbReference type="Pfam" id="PF01541">
    <property type="entry name" value="GIY-YIG"/>
    <property type="match status" value="1"/>
</dbReference>
<dbReference type="Pfam" id="PF14520">
    <property type="entry name" value="HHH_5"/>
    <property type="match status" value="1"/>
</dbReference>
<dbReference type="Pfam" id="PF02151">
    <property type="entry name" value="UVR"/>
    <property type="match status" value="1"/>
</dbReference>
<dbReference type="Pfam" id="PF22920">
    <property type="entry name" value="UvrC_RNaseH"/>
    <property type="match status" value="1"/>
</dbReference>
<dbReference type="Pfam" id="PF08459">
    <property type="entry name" value="UvrC_RNaseH_dom"/>
    <property type="match status" value="1"/>
</dbReference>
<dbReference type="SMART" id="SM00465">
    <property type="entry name" value="GIYc"/>
    <property type="match status" value="1"/>
</dbReference>
<dbReference type="SMART" id="SM00278">
    <property type="entry name" value="HhH1"/>
    <property type="match status" value="2"/>
</dbReference>
<dbReference type="SUPFAM" id="SSF46600">
    <property type="entry name" value="C-terminal UvrC-binding domain of UvrB"/>
    <property type="match status" value="1"/>
</dbReference>
<dbReference type="SUPFAM" id="SSF82771">
    <property type="entry name" value="GIY-YIG endonuclease"/>
    <property type="match status" value="1"/>
</dbReference>
<dbReference type="SUPFAM" id="SSF47781">
    <property type="entry name" value="RuvA domain 2-like"/>
    <property type="match status" value="1"/>
</dbReference>
<dbReference type="PROSITE" id="PS50164">
    <property type="entry name" value="GIY_YIG"/>
    <property type="match status" value="1"/>
</dbReference>
<dbReference type="PROSITE" id="PS50151">
    <property type="entry name" value="UVR"/>
    <property type="match status" value="1"/>
</dbReference>
<dbReference type="PROSITE" id="PS50165">
    <property type="entry name" value="UVRC"/>
    <property type="match status" value="1"/>
</dbReference>
<gene>
    <name evidence="1" type="primary">uvrC</name>
    <name type="ordered locus">DICTH_1375</name>
</gene>
<name>UVRC_DICT6</name>
<keyword id="KW-0963">Cytoplasm</keyword>
<keyword id="KW-0227">DNA damage</keyword>
<keyword id="KW-0228">DNA excision</keyword>
<keyword id="KW-0234">DNA repair</keyword>
<keyword id="KW-0267">Excision nuclease</keyword>
<keyword id="KW-0742">SOS response</keyword>
<sequence>MRNDFFIMDLKQKVENFPESTGVYIFYDHSGKVIYVGKAKNLRKRVLSYFNDDSPKSNYILKKAKNIEFYITDTETEALILESVLIKKYRPIMNVQLRDDKQYPMLKLTLYEEYPRLVLARRFEDDGARYYGPYTQSGTVRETISMVKKIFNLRSCNWNLPKSKPKRPCLNYFIGNCKAPCQNYITKEEYWEIVKGVIDFLDGKYEEIIEKLYDQMQEYSKNLEFEKAAKIRDKIRLLQNLSEKQKIVSFNRENKDLIQFYVEDHKAKALVYLIREGKLIEKRIFNLTLPEICSNDELIESFVLQYYSRGEIPEVIVVPSPFSEEEVNLKEFLCKRKGSEVVLRTPENEEEEKLLGMALKDLTIESIKSEKVWLALSELQRIFNLQNLPVSIEGYDISNLQGREAVGSRVYFQNGYPEKTKYRRYKIKYTPELPNDYLMLQEVIRRRLKNIEEDPLPDIMLIDGGKGQLSAVLEVFNELKIEPKFILALAKEKEEIFVPGRSEPILLSYDSPALHLLQQVRDEAHRFAVSYHRKLRSKKLMDSHLDKIPGVGEKRMKILLEAFSTLENLKKASLEDLKKVPGISEKIAEKIYLYFHDSS</sequence>
<reference key="1">
    <citation type="journal article" date="2014" name="Genome Announc.">
        <title>Complete Genome Sequence of the Extreme Thermophile Dictyoglomus thermophilum H-6-12.</title>
        <authorList>
            <person name="Coil D.A."/>
            <person name="Badger J.H."/>
            <person name="Forberger H.C."/>
            <person name="Riggs F."/>
            <person name="Madupu R."/>
            <person name="Fedorova N."/>
            <person name="Ward N."/>
            <person name="Robb F.T."/>
            <person name="Eisen J.A."/>
        </authorList>
    </citation>
    <scope>NUCLEOTIDE SEQUENCE [LARGE SCALE GENOMIC DNA]</scope>
    <source>
        <strain>ATCC 35947 / DSM 3960 / H-6-12</strain>
    </source>
</reference>
<accession>B5YF86</accession>